<evidence type="ECO:0000250" key="1"/>
<evidence type="ECO:0000255" key="2"/>
<evidence type="ECO:0000269" key="3">
    <source>
    </source>
</evidence>
<evidence type="ECO:0000305" key="4"/>
<reference key="1">
    <citation type="journal article" date="2000" name="DNA Res.">
        <title>Structural analysis of Arabidopsis thaliana chromosome 3. I. Sequence features of the regions of 4,504,864 bp covered by sixty P1 and TAC clones.</title>
        <authorList>
            <person name="Sato S."/>
            <person name="Nakamura Y."/>
            <person name="Kaneko T."/>
            <person name="Katoh T."/>
            <person name="Asamizu E."/>
            <person name="Tabata S."/>
        </authorList>
    </citation>
    <scope>NUCLEOTIDE SEQUENCE [LARGE SCALE GENOMIC DNA]</scope>
    <source>
        <strain>cv. Columbia</strain>
    </source>
</reference>
<reference key="2">
    <citation type="journal article" date="2017" name="Plant J.">
        <title>Araport11: a complete reannotation of the Arabidopsis thaliana reference genome.</title>
        <authorList>
            <person name="Cheng C.Y."/>
            <person name="Krishnakumar V."/>
            <person name="Chan A.P."/>
            <person name="Thibaud-Nissen F."/>
            <person name="Schobel S."/>
            <person name="Town C.D."/>
        </authorList>
    </citation>
    <scope>GENOME REANNOTATION</scope>
    <source>
        <strain>cv. Columbia</strain>
    </source>
</reference>
<reference key="3">
    <citation type="journal article" date="2005" name="Plant Physiol.">
        <title>An expression and bioinformatics analysis of the Arabidopsis serine carboxypeptidase-like gene family.</title>
        <authorList>
            <person name="Fraser C.M."/>
            <person name="Rider L.W."/>
            <person name="Chapple C."/>
        </authorList>
    </citation>
    <scope>GENE FAMILY</scope>
    <scope>TISSUE SPECIFICITY</scope>
    <scope>NOMENCLATURE</scope>
</reference>
<sequence length="478" mass="54145">MNLTLPMKKQKFLLIISLLILLSLLHQDYHIEAQNSDKVVNLPEQPLNPKISHFSGYVNVNQENTRSLFFWFFEALSESPSTRPLVLWLNGGPGCSSIGYGAASELGPFRVVENGTSLSFNQYSWVQEANMLFLESPVGVGFSYTNSSSDLENLNDAFVAEDAYNFMVAWFARYPQYKSRDFFIAGESYAGHYSPQLAELIYDRNKVQPKDSFINLKGFIVGNPLTDDEYDNKGILEYAWSHAVISDHLYDSAKHNCDFKSSNWSEPCNVAMNTVFTKYKEIDIYNIYAPKCISNSSSGASYLGFGVNDKSPAVKDWFKRVRWFEGYDPCYSNYAEEYFNRVDVRLSLHATTRNVARWKVCNDSILQTYHFTVSSMLPTYSKLIKAGLKIWVYSGDADGRVPVIGSRYCVEALGISVKSEWRSWFHNHQVGGRITEYEGGLTFVTVRGAGHLVPLNKPEEALALFRSFLNGQELPSSP</sequence>
<organism>
    <name type="scientific">Arabidopsis thaliana</name>
    <name type="common">Mouse-ear cress</name>
    <dbReference type="NCBI Taxonomy" id="3702"/>
    <lineage>
        <taxon>Eukaryota</taxon>
        <taxon>Viridiplantae</taxon>
        <taxon>Streptophyta</taxon>
        <taxon>Embryophyta</taxon>
        <taxon>Tracheophyta</taxon>
        <taxon>Spermatophyta</taxon>
        <taxon>Magnoliopsida</taxon>
        <taxon>eudicotyledons</taxon>
        <taxon>Gunneridae</taxon>
        <taxon>Pentapetalae</taxon>
        <taxon>rosids</taxon>
        <taxon>malvids</taxon>
        <taxon>Brassicales</taxon>
        <taxon>Brassicaceae</taxon>
        <taxon>Camelineae</taxon>
        <taxon>Arabidopsis</taxon>
    </lineage>
</organism>
<comment type="function">
    <text evidence="1">Probable carboxypeptidase.</text>
</comment>
<comment type="subcellular location">
    <subcellularLocation>
        <location evidence="4">Secreted</location>
    </subcellularLocation>
</comment>
<comment type="tissue specificity">
    <text evidence="3">Expressed in senescent leaves and flowers.</text>
</comment>
<comment type="similarity">
    <text evidence="4">Belongs to the peptidase S10 family.</text>
</comment>
<comment type="sequence caution" evidence="4">
    <conflict type="erroneous initiation">
        <sequence resource="EMBL-CDS" id="BAA94996"/>
    </conflict>
    <text>Truncated N-terminus.</text>
</comment>
<proteinExistence type="evidence at transcript level"/>
<keyword id="KW-0121">Carboxypeptidase</keyword>
<keyword id="KW-1015">Disulfide bond</keyword>
<keyword id="KW-0325">Glycoprotein</keyword>
<keyword id="KW-0378">Hydrolase</keyword>
<keyword id="KW-0645">Protease</keyword>
<keyword id="KW-1185">Reference proteome</keyword>
<keyword id="KW-0964">Secreted</keyword>
<keyword id="KW-0732">Signal</keyword>
<gene>
    <name type="primary">SCPL33</name>
    <name type="ordered locus">At3g17180</name>
    <name type="ORF">K14A17.30</name>
</gene>
<name>SCP33_ARATH</name>
<feature type="signal peptide" evidence="2">
    <location>
        <begin position="1"/>
        <end position="33"/>
    </location>
</feature>
<feature type="chain" id="PRO_0000274648" description="Serine carboxypeptidase-like 33">
    <location>
        <begin position="34"/>
        <end position="478"/>
    </location>
</feature>
<feature type="active site" evidence="1">
    <location>
        <position position="188"/>
    </location>
</feature>
<feature type="active site" evidence="1">
    <location>
        <position position="398"/>
    </location>
</feature>
<feature type="active site" evidence="1">
    <location>
        <position position="451"/>
    </location>
</feature>
<feature type="glycosylation site" description="N-linked (GlcNAc...) asparagine" evidence="2">
    <location>
        <position position="114"/>
    </location>
</feature>
<feature type="glycosylation site" description="N-linked (GlcNAc...) asparagine" evidence="2">
    <location>
        <position position="146"/>
    </location>
</feature>
<feature type="glycosylation site" description="N-linked (GlcNAc...) asparagine" evidence="2">
    <location>
        <position position="263"/>
    </location>
</feature>
<feature type="glycosylation site" description="N-linked (GlcNAc...) asparagine" evidence="2">
    <location>
        <position position="295"/>
    </location>
</feature>
<feature type="glycosylation site" description="N-linked (GlcNAc...) asparagine" evidence="2">
    <location>
        <position position="362"/>
    </location>
</feature>
<feature type="disulfide bond" evidence="1">
    <location>
        <begin position="95"/>
        <end position="361"/>
    </location>
</feature>
<feature type="disulfide bond" evidence="1">
    <location>
        <begin position="257"/>
        <end position="268"/>
    </location>
</feature>
<feature type="disulfide bond" evidence="1">
    <location>
        <begin position="292"/>
        <end position="330"/>
    </location>
</feature>
<accession>Q9LSM9</accession>
<dbReference type="EC" id="3.4.16.-"/>
<dbReference type="EMBL" id="AB026636">
    <property type="protein sequence ID" value="BAA94996.1"/>
    <property type="status" value="ALT_INIT"/>
    <property type="molecule type" value="Genomic_DNA"/>
</dbReference>
<dbReference type="EMBL" id="CP002686">
    <property type="protein sequence ID" value="AEE75915.1"/>
    <property type="molecule type" value="Genomic_DNA"/>
</dbReference>
<dbReference type="RefSeq" id="NP_188343.1">
    <property type="nucleotide sequence ID" value="NM_112594.2"/>
</dbReference>
<dbReference type="SMR" id="Q9LSM9"/>
<dbReference type="STRING" id="3702.Q9LSM9"/>
<dbReference type="ESTHER" id="arath-SCP33">
    <property type="family name" value="Carboxypeptidase_S10"/>
</dbReference>
<dbReference type="MEROPS" id="S10.A20"/>
<dbReference type="GlyCosmos" id="Q9LSM9">
    <property type="glycosylation" value="5 sites, No reported glycans"/>
</dbReference>
<dbReference type="GlyGen" id="Q9LSM9">
    <property type="glycosylation" value="5 sites"/>
</dbReference>
<dbReference type="PaxDb" id="3702-AT3G17180.1"/>
<dbReference type="ProteomicsDB" id="232824"/>
<dbReference type="EnsemblPlants" id="AT3G17180.1">
    <property type="protein sequence ID" value="AT3G17180.1"/>
    <property type="gene ID" value="AT3G17180"/>
</dbReference>
<dbReference type="GeneID" id="820975"/>
<dbReference type="Gramene" id="AT3G17180.1">
    <property type="protein sequence ID" value="AT3G17180.1"/>
    <property type="gene ID" value="AT3G17180"/>
</dbReference>
<dbReference type="KEGG" id="ath:AT3G17180"/>
<dbReference type="Araport" id="AT3G17180"/>
<dbReference type="TAIR" id="AT3G17180">
    <property type="gene designation" value="SCPL33"/>
</dbReference>
<dbReference type="eggNOG" id="KOG1282">
    <property type="taxonomic scope" value="Eukaryota"/>
</dbReference>
<dbReference type="HOGENOM" id="CLU_008523_13_0_1"/>
<dbReference type="InParanoid" id="Q9LSM9"/>
<dbReference type="OMA" id="DQVYERI"/>
<dbReference type="OrthoDB" id="443318at2759"/>
<dbReference type="PRO" id="PR:Q9LSM9"/>
<dbReference type="Proteomes" id="UP000006548">
    <property type="component" value="Chromosome 3"/>
</dbReference>
<dbReference type="ExpressionAtlas" id="Q9LSM9">
    <property type="expression patterns" value="baseline and differential"/>
</dbReference>
<dbReference type="GO" id="GO:0005576">
    <property type="term" value="C:extracellular region"/>
    <property type="evidence" value="ECO:0007669"/>
    <property type="project" value="UniProtKB-SubCell"/>
</dbReference>
<dbReference type="GO" id="GO:0004185">
    <property type="term" value="F:serine-type carboxypeptidase activity"/>
    <property type="evidence" value="ECO:0007669"/>
    <property type="project" value="InterPro"/>
</dbReference>
<dbReference type="GO" id="GO:0006508">
    <property type="term" value="P:proteolysis"/>
    <property type="evidence" value="ECO:0007669"/>
    <property type="project" value="UniProtKB-KW"/>
</dbReference>
<dbReference type="FunFam" id="3.40.50.11320:FF:000001">
    <property type="entry name" value="Carboxypeptidase"/>
    <property type="match status" value="1"/>
</dbReference>
<dbReference type="FunFam" id="3.40.50.1820:FF:000013">
    <property type="entry name" value="Carboxypeptidase"/>
    <property type="match status" value="1"/>
</dbReference>
<dbReference type="Gene3D" id="3.40.50.11320">
    <property type="match status" value="1"/>
</dbReference>
<dbReference type="Gene3D" id="6.10.250.940">
    <property type="match status" value="1"/>
</dbReference>
<dbReference type="Gene3D" id="3.40.50.1820">
    <property type="entry name" value="alpha/beta hydrolase"/>
    <property type="match status" value="1"/>
</dbReference>
<dbReference type="InterPro" id="IPR029058">
    <property type="entry name" value="AB_hydrolase_fold"/>
</dbReference>
<dbReference type="InterPro" id="IPR001563">
    <property type="entry name" value="Peptidase_S10"/>
</dbReference>
<dbReference type="InterPro" id="IPR033124">
    <property type="entry name" value="Ser_caboxypep_his_AS"/>
</dbReference>
<dbReference type="InterPro" id="IPR018202">
    <property type="entry name" value="Ser_caboxypep_ser_AS"/>
</dbReference>
<dbReference type="PANTHER" id="PTHR11802:SF235">
    <property type="entry name" value="SERINE CARBOXYPEPTIDASE-LIKE 33"/>
    <property type="match status" value="1"/>
</dbReference>
<dbReference type="PANTHER" id="PTHR11802">
    <property type="entry name" value="SERINE PROTEASE FAMILY S10 SERINE CARBOXYPEPTIDASE"/>
    <property type="match status" value="1"/>
</dbReference>
<dbReference type="Pfam" id="PF00450">
    <property type="entry name" value="Peptidase_S10"/>
    <property type="match status" value="1"/>
</dbReference>
<dbReference type="PRINTS" id="PR00724">
    <property type="entry name" value="CRBOXYPTASEC"/>
</dbReference>
<dbReference type="SUPFAM" id="SSF53474">
    <property type="entry name" value="alpha/beta-Hydrolases"/>
    <property type="match status" value="1"/>
</dbReference>
<dbReference type="PROSITE" id="PS00560">
    <property type="entry name" value="CARBOXYPEPT_SER_HIS"/>
    <property type="match status" value="1"/>
</dbReference>
<dbReference type="PROSITE" id="PS00131">
    <property type="entry name" value="CARBOXYPEPT_SER_SER"/>
    <property type="match status" value="1"/>
</dbReference>
<protein>
    <recommendedName>
        <fullName>Serine carboxypeptidase-like 33</fullName>
        <ecNumber>3.4.16.-</ecNumber>
    </recommendedName>
</protein>